<evidence type="ECO:0000255" key="1">
    <source>
        <dbReference type="HAMAP-Rule" id="MF_00815"/>
    </source>
</evidence>
<sequence>MAQLRELRNRIRSVKSTRKITKAQELIATSRIMKAQARVEASRPYADEITNVLTALADASTLDHPLLTERENPKRAGVLVVTSDRGFCGGYNANVLRAAEELQTLLREQGKTPVLYVVGRKGEAYYRFRQREIAKSWTGFTDRPDYSDAADIGETLVKAFLAGADDYLDDGGPDGTLGVDELHLVHTEFVSMITQKPSVKRVAPLEVEYSEEPQKTLRPVYDFEPDADTLFKALLPKYINTRLFAGLLDAAASEHAARRTAMKSATDNADEIIRTLSREANQARQAQITQEISEIVGGVEALSSAGSE</sequence>
<protein>
    <recommendedName>
        <fullName evidence="1">ATP synthase gamma chain</fullName>
    </recommendedName>
    <alternativeName>
        <fullName evidence="1">ATP synthase F1 sector gamma subunit</fullName>
    </alternativeName>
    <alternativeName>
        <fullName evidence="1">F-ATPase gamma subunit</fullName>
    </alternativeName>
</protein>
<reference key="1">
    <citation type="journal article" date="2007" name="Nat. Biotechnol.">
        <title>Complete genome sequence of the erythromycin-producing bacterium Saccharopolyspora erythraea NRRL23338.</title>
        <authorList>
            <person name="Oliynyk M."/>
            <person name="Samborskyy M."/>
            <person name="Lester J.B."/>
            <person name="Mironenko T."/>
            <person name="Scott N."/>
            <person name="Dickens S."/>
            <person name="Haydock S.F."/>
            <person name="Leadlay P.F."/>
        </authorList>
    </citation>
    <scope>NUCLEOTIDE SEQUENCE [LARGE SCALE GENOMIC DNA]</scope>
    <source>
        <strain>ATCC 11635 / DSM 40517 / JCM 4748 / NBRC 13426 / NCIMB 8594 / NRRL 2338</strain>
    </source>
</reference>
<organism>
    <name type="scientific">Saccharopolyspora erythraea (strain ATCC 11635 / DSM 40517 / JCM 4748 / NBRC 13426 / NCIMB 8594 / NRRL 2338)</name>
    <dbReference type="NCBI Taxonomy" id="405948"/>
    <lineage>
        <taxon>Bacteria</taxon>
        <taxon>Bacillati</taxon>
        <taxon>Actinomycetota</taxon>
        <taxon>Actinomycetes</taxon>
        <taxon>Pseudonocardiales</taxon>
        <taxon>Pseudonocardiaceae</taxon>
        <taxon>Saccharopolyspora</taxon>
    </lineage>
</organism>
<name>ATPG_SACEN</name>
<accession>A4FN28</accession>
<gene>
    <name evidence="1" type="primary">atpG</name>
    <name type="ordered locus">SACE_6281</name>
</gene>
<comment type="function">
    <text evidence="1">Produces ATP from ADP in the presence of a proton gradient across the membrane. The gamma chain is believed to be important in regulating ATPase activity and the flow of protons through the CF(0) complex.</text>
</comment>
<comment type="subunit">
    <text evidence="1">F-type ATPases have 2 components, CF(1) - the catalytic core - and CF(0) - the membrane proton channel. CF(1) has five subunits: alpha(3), beta(3), gamma(1), delta(1), epsilon(1). CF(0) has three main subunits: a, b and c.</text>
</comment>
<comment type="subcellular location">
    <subcellularLocation>
        <location evidence="1">Cell membrane</location>
        <topology evidence="1">Peripheral membrane protein</topology>
    </subcellularLocation>
</comment>
<comment type="similarity">
    <text evidence="1">Belongs to the ATPase gamma chain family.</text>
</comment>
<dbReference type="EMBL" id="AM420293">
    <property type="protein sequence ID" value="CAM05453.1"/>
    <property type="molecule type" value="Genomic_DNA"/>
</dbReference>
<dbReference type="RefSeq" id="WP_009948479.1">
    <property type="nucleotide sequence ID" value="NC_009142.1"/>
</dbReference>
<dbReference type="SMR" id="A4FN28"/>
<dbReference type="STRING" id="405948.SACE_6281"/>
<dbReference type="KEGG" id="sen:SACE_6281"/>
<dbReference type="eggNOG" id="COG0224">
    <property type="taxonomic scope" value="Bacteria"/>
</dbReference>
<dbReference type="HOGENOM" id="CLU_050669_0_0_11"/>
<dbReference type="OrthoDB" id="9812769at2"/>
<dbReference type="Proteomes" id="UP000006728">
    <property type="component" value="Chromosome"/>
</dbReference>
<dbReference type="GO" id="GO:0005886">
    <property type="term" value="C:plasma membrane"/>
    <property type="evidence" value="ECO:0007669"/>
    <property type="project" value="UniProtKB-SubCell"/>
</dbReference>
<dbReference type="GO" id="GO:0045259">
    <property type="term" value="C:proton-transporting ATP synthase complex"/>
    <property type="evidence" value="ECO:0007669"/>
    <property type="project" value="UniProtKB-KW"/>
</dbReference>
<dbReference type="GO" id="GO:0005524">
    <property type="term" value="F:ATP binding"/>
    <property type="evidence" value="ECO:0007669"/>
    <property type="project" value="UniProtKB-UniRule"/>
</dbReference>
<dbReference type="GO" id="GO:0046933">
    <property type="term" value="F:proton-transporting ATP synthase activity, rotational mechanism"/>
    <property type="evidence" value="ECO:0007669"/>
    <property type="project" value="UniProtKB-UniRule"/>
</dbReference>
<dbReference type="GO" id="GO:0042777">
    <property type="term" value="P:proton motive force-driven plasma membrane ATP synthesis"/>
    <property type="evidence" value="ECO:0007669"/>
    <property type="project" value="UniProtKB-UniRule"/>
</dbReference>
<dbReference type="CDD" id="cd12151">
    <property type="entry name" value="F1-ATPase_gamma"/>
    <property type="match status" value="1"/>
</dbReference>
<dbReference type="Gene3D" id="3.40.1380.10">
    <property type="match status" value="1"/>
</dbReference>
<dbReference type="Gene3D" id="1.10.287.80">
    <property type="entry name" value="ATP synthase, gamma subunit, helix hairpin domain"/>
    <property type="match status" value="1"/>
</dbReference>
<dbReference type="HAMAP" id="MF_00815">
    <property type="entry name" value="ATP_synth_gamma_bact"/>
    <property type="match status" value="1"/>
</dbReference>
<dbReference type="InterPro" id="IPR035968">
    <property type="entry name" value="ATP_synth_F1_ATPase_gsu"/>
</dbReference>
<dbReference type="InterPro" id="IPR000131">
    <property type="entry name" value="ATP_synth_F1_gsu"/>
</dbReference>
<dbReference type="NCBIfam" id="TIGR01146">
    <property type="entry name" value="ATPsyn_F1gamma"/>
    <property type="match status" value="1"/>
</dbReference>
<dbReference type="NCBIfam" id="NF004145">
    <property type="entry name" value="PRK05621.1-2"/>
    <property type="match status" value="1"/>
</dbReference>
<dbReference type="PANTHER" id="PTHR11693">
    <property type="entry name" value="ATP SYNTHASE GAMMA CHAIN"/>
    <property type="match status" value="1"/>
</dbReference>
<dbReference type="PANTHER" id="PTHR11693:SF22">
    <property type="entry name" value="ATP SYNTHASE SUBUNIT GAMMA, MITOCHONDRIAL"/>
    <property type="match status" value="1"/>
</dbReference>
<dbReference type="Pfam" id="PF00231">
    <property type="entry name" value="ATP-synt"/>
    <property type="match status" value="1"/>
</dbReference>
<dbReference type="PRINTS" id="PR00126">
    <property type="entry name" value="ATPASEGAMMA"/>
</dbReference>
<dbReference type="SUPFAM" id="SSF52943">
    <property type="entry name" value="ATP synthase (F1-ATPase), gamma subunit"/>
    <property type="match status" value="1"/>
</dbReference>
<feature type="chain" id="PRO_1000053322" description="ATP synthase gamma chain">
    <location>
        <begin position="1"/>
        <end position="308"/>
    </location>
</feature>
<keyword id="KW-0066">ATP synthesis</keyword>
<keyword id="KW-1003">Cell membrane</keyword>
<keyword id="KW-0139">CF(1)</keyword>
<keyword id="KW-0375">Hydrogen ion transport</keyword>
<keyword id="KW-0406">Ion transport</keyword>
<keyword id="KW-0472">Membrane</keyword>
<keyword id="KW-1185">Reference proteome</keyword>
<keyword id="KW-0813">Transport</keyword>
<proteinExistence type="inferred from homology"/>